<reference key="1">
    <citation type="submission" date="2008-10" db="EMBL/GenBank/DDBJ databases">
        <title>Genome sequence of Bacillus cereus B4264.</title>
        <authorList>
            <person name="Dodson R.J."/>
            <person name="Durkin A.S."/>
            <person name="Rosovitz M.J."/>
            <person name="Rasko D.A."/>
            <person name="Hoffmaster A."/>
            <person name="Ravel J."/>
            <person name="Sutton G."/>
        </authorList>
    </citation>
    <scope>NUCLEOTIDE SEQUENCE [LARGE SCALE GENOMIC DNA]</scope>
    <source>
        <strain>B4264</strain>
    </source>
</reference>
<gene>
    <name evidence="1" type="primary">hisG</name>
    <name type="ordered locus">BCB4264_A1458</name>
</gene>
<evidence type="ECO:0000255" key="1">
    <source>
        <dbReference type="HAMAP-Rule" id="MF_01018"/>
    </source>
</evidence>
<sequence>MRNIQIALTKGRLEKHVIPLFEQIGIDCSELKNKGRKLVFQSKNTNVSFILVKAIDVATYVEHGVADIGIVGKDILMENEKDIYEMLDLGVGICKFCVASIPTYNPKSYRKKRIATKYPHITSTYYHEKGEDVEIIKIEGSVEIAPLLGLADAIVDIVETGKTLQENGLIVFEEMYFISARMIVNKAALKTKKDEIFSIINMMEQEILSGK</sequence>
<accession>B7HHG0</accession>
<keyword id="KW-0028">Amino-acid biosynthesis</keyword>
<keyword id="KW-0067">ATP-binding</keyword>
<keyword id="KW-0963">Cytoplasm</keyword>
<keyword id="KW-0328">Glycosyltransferase</keyword>
<keyword id="KW-0368">Histidine biosynthesis</keyword>
<keyword id="KW-0547">Nucleotide-binding</keyword>
<keyword id="KW-0808">Transferase</keyword>
<comment type="function">
    <text evidence="1">Catalyzes the condensation of ATP and 5-phosphoribose 1-diphosphate to form N'-(5'-phosphoribosyl)-ATP (PR-ATP). Has a crucial role in the pathway because the rate of histidine biosynthesis seems to be controlled primarily by regulation of HisG enzymatic activity.</text>
</comment>
<comment type="catalytic activity">
    <reaction evidence="1">
        <text>1-(5-phospho-beta-D-ribosyl)-ATP + diphosphate = 5-phospho-alpha-D-ribose 1-diphosphate + ATP</text>
        <dbReference type="Rhea" id="RHEA:18473"/>
        <dbReference type="ChEBI" id="CHEBI:30616"/>
        <dbReference type="ChEBI" id="CHEBI:33019"/>
        <dbReference type="ChEBI" id="CHEBI:58017"/>
        <dbReference type="ChEBI" id="CHEBI:73183"/>
        <dbReference type="EC" id="2.4.2.17"/>
    </reaction>
</comment>
<comment type="pathway">
    <text evidence="1">Amino-acid biosynthesis; L-histidine biosynthesis; L-histidine from 5-phospho-alpha-D-ribose 1-diphosphate: step 1/9.</text>
</comment>
<comment type="subunit">
    <text evidence="1">Heteromultimer composed of HisG and HisZ subunits.</text>
</comment>
<comment type="subcellular location">
    <subcellularLocation>
        <location evidence="1">Cytoplasm</location>
    </subcellularLocation>
</comment>
<comment type="domain">
    <text>Lacks the C-terminal regulatory region which is replaced by HisZ.</text>
</comment>
<comment type="similarity">
    <text evidence="1">Belongs to the ATP phosphoribosyltransferase family. Short subfamily.</text>
</comment>
<protein>
    <recommendedName>
        <fullName evidence="1">ATP phosphoribosyltransferase</fullName>
        <shortName evidence="1">ATP-PRT</shortName>
        <shortName evidence="1">ATP-PRTase</shortName>
        <ecNumber evidence="1">2.4.2.17</ecNumber>
    </recommendedName>
</protein>
<dbReference type="EC" id="2.4.2.17" evidence="1"/>
<dbReference type="EMBL" id="CP001176">
    <property type="protein sequence ID" value="ACK62144.1"/>
    <property type="molecule type" value="Genomic_DNA"/>
</dbReference>
<dbReference type="RefSeq" id="WP_001244489.1">
    <property type="nucleotide sequence ID" value="NC_011725.1"/>
</dbReference>
<dbReference type="SMR" id="B7HHG0"/>
<dbReference type="KEGG" id="bcb:BCB4264_A1458"/>
<dbReference type="HOGENOM" id="CLU_038115_2_0_9"/>
<dbReference type="UniPathway" id="UPA00031">
    <property type="reaction ID" value="UER00006"/>
</dbReference>
<dbReference type="Proteomes" id="UP000007096">
    <property type="component" value="Chromosome"/>
</dbReference>
<dbReference type="GO" id="GO:0005737">
    <property type="term" value="C:cytoplasm"/>
    <property type="evidence" value="ECO:0007669"/>
    <property type="project" value="UniProtKB-SubCell"/>
</dbReference>
<dbReference type="GO" id="GO:0005524">
    <property type="term" value="F:ATP binding"/>
    <property type="evidence" value="ECO:0007669"/>
    <property type="project" value="UniProtKB-KW"/>
</dbReference>
<dbReference type="GO" id="GO:0003879">
    <property type="term" value="F:ATP phosphoribosyltransferase activity"/>
    <property type="evidence" value="ECO:0007669"/>
    <property type="project" value="UniProtKB-UniRule"/>
</dbReference>
<dbReference type="GO" id="GO:0000105">
    <property type="term" value="P:L-histidine biosynthetic process"/>
    <property type="evidence" value="ECO:0007669"/>
    <property type="project" value="UniProtKB-UniRule"/>
</dbReference>
<dbReference type="CDD" id="cd13595">
    <property type="entry name" value="PBP2_HisGs"/>
    <property type="match status" value="1"/>
</dbReference>
<dbReference type="FunFam" id="3.40.190.10:FF:000011">
    <property type="entry name" value="ATP phosphoribosyltransferase"/>
    <property type="match status" value="1"/>
</dbReference>
<dbReference type="Gene3D" id="3.40.190.10">
    <property type="entry name" value="Periplasmic binding protein-like II"/>
    <property type="match status" value="2"/>
</dbReference>
<dbReference type="HAMAP" id="MF_01018">
    <property type="entry name" value="HisG_Short"/>
    <property type="match status" value="1"/>
</dbReference>
<dbReference type="InterPro" id="IPR013820">
    <property type="entry name" value="ATP_PRibTrfase_cat"/>
</dbReference>
<dbReference type="InterPro" id="IPR018198">
    <property type="entry name" value="ATP_PRibTrfase_CS"/>
</dbReference>
<dbReference type="InterPro" id="IPR001348">
    <property type="entry name" value="ATP_PRibTrfase_HisG"/>
</dbReference>
<dbReference type="InterPro" id="IPR024893">
    <property type="entry name" value="ATP_PRibTrfase_HisG_short"/>
</dbReference>
<dbReference type="NCBIfam" id="TIGR00070">
    <property type="entry name" value="hisG"/>
    <property type="match status" value="1"/>
</dbReference>
<dbReference type="PANTHER" id="PTHR21403:SF8">
    <property type="entry name" value="ATP PHOSPHORIBOSYLTRANSFERASE"/>
    <property type="match status" value="1"/>
</dbReference>
<dbReference type="PANTHER" id="PTHR21403">
    <property type="entry name" value="ATP PHOSPHORIBOSYLTRANSFERASE ATP-PRTASE"/>
    <property type="match status" value="1"/>
</dbReference>
<dbReference type="Pfam" id="PF01634">
    <property type="entry name" value="HisG"/>
    <property type="match status" value="1"/>
</dbReference>
<dbReference type="SUPFAM" id="SSF53850">
    <property type="entry name" value="Periplasmic binding protein-like II"/>
    <property type="match status" value="1"/>
</dbReference>
<dbReference type="PROSITE" id="PS01316">
    <property type="entry name" value="ATP_P_PHORIBOSYLTR"/>
    <property type="match status" value="1"/>
</dbReference>
<proteinExistence type="inferred from homology"/>
<feature type="chain" id="PRO_1000135268" description="ATP phosphoribosyltransferase">
    <location>
        <begin position="1"/>
        <end position="211"/>
    </location>
</feature>
<organism>
    <name type="scientific">Bacillus cereus (strain B4264)</name>
    <dbReference type="NCBI Taxonomy" id="405532"/>
    <lineage>
        <taxon>Bacteria</taxon>
        <taxon>Bacillati</taxon>
        <taxon>Bacillota</taxon>
        <taxon>Bacilli</taxon>
        <taxon>Bacillales</taxon>
        <taxon>Bacillaceae</taxon>
        <taxon>Bacillus</taxon>
        <taxon>Bacillus cereus group</taxon>
    </lineage>
</organism>
<name>HIS1_BACC4</name>